<feature type="chain" id="PRO_0000110005" description="Regulatory protein DnrI">
    <location>
        <begin position="1"/>
        <end position="272"/>
    </location>
</feature>
<feature type="DNA-binding region" description="OmpR/PhoB-type" evidence="1">
    <location>
        <begin position="1"/>
        <end position="100"/>
    </location>
</feature>
<accession>P25047</accession>
<organism>
    <name type="scientific">Streptomyces peucetius</name>
    <dbReference type="NCBI Taxonomy" id="1950"/>
    <lineage>
        <taxon>Bacteria</taxon>
        <taxon>Bacillati</taxon>
        <taxon>Actinomycetota</taxon>
        <taxon>Actinomycetes</taxon>
        <taxon>Kitasatosporales</taxon>
        <taxon>Streptomycetaceae</taxon>
        <taxon>Streptomyces</taxon>
    </lineage>
</organism>
<comment type="function">
    <text>May form, with DnrJ a two-component regulatory system for daunorubicin biosynthesis genes.</text>
</comment>
<comment type="similarity">
    <text evidence="2">Belongs to the AfsR/DnrI/RedD regulatory family.</text>
</comment>
<reference key="1">
    <citation type="journal article" date="1992" name="J. Bacteriol.">
        <title>Regulation of secondary metabolism in Streptomyces spp. and overproduction of daunorubicin in Streptomyces peucetius.</title>
        <authorList>
            <person name="Stutzman-Engwall K.J."/>
            <person name="Otten S.L."/>
            <person name="Hutchinson C.R."/>
        </authorList>
    </citation>
    <scope>NUCLEOTIDE SEQUENCE [GENOMIC DNA]</scope>
    <source>
        <strain>ATCC 29050 / DSM 40754 / JCM 9920 / NBRC 100596 / NCIMB 10972</strain>
    </source>
</reference>
<proteinExistence type="inferred from homology"/>
<dbReference type="EMBL" id="M80237">
    <property type="protein sequence ID" value="AAA26736.1"/>
    <property type="molecule type" value="Genomic_DNA"/>
</dbReference>
<dbReference type="PIR" id="A43306">
    <property type="entry name" value="A43306"/>
</dbReference>
<dbReference type="SMR" id="P25047"/>
<dbReference type="GO" id="GO:0003677">
    <property type="term" value="F:DNA binding"/>
    <property type="evidence" value="ECO:0007669"/>
    <property type="project" value="UniProtKB-KW"/>
</dbReference>
<dbReference type="GO" id="GO:0017000">
    <property type="term" value="P:antibiotic biosynthetic process"/>
    <property type="evidence" value="ECO:0007669"/>
    <property type="project" value="UniProtKB-KW"/>
</dbReference>
<dbReference type="GO" id="GO:0000160">
    <property type="term" value="P:phosphorelay signal transduction system"/>
    <property type="evidence" value="ECO:0007669"/>
    <property type="project" value="UniProtKB-KW"/>
</dbReference>
<dbReference type="GO" id="GO:0006355">
    <property type="term" value="P:regulation of DNA-templated transcription"/>
    <property type="evidence" value="ECO:0007669"/>
    <property type="project" value="InterPro"/>
</dbReference>
<dbReference type="CDD" id="cd15831">
    <property type="entry name" value="BTAD"/>
    <property type="match status" value="1"/>
</dbReference>
<dbReference type="FunFam" id="1.25.40.10:FF:000222">
    <property type="entry name" value="SARP family transcriptional regulator"/>
    <property type="match status" value="1"/>
</dbReference>
<dbReference type="Gene3D" id="1.25.40.10">
    <property type="entry name" value="Tetratricopeptide repeat domain"/>
    <property type="match status" value="1"/>
</dbReference>
<dbReference type="Gene3D" id="1.10.10.10">
    <property type="entry name" value="Winged helix-like DNA-binding domain superfamily/Winged helix DNA-binding domain"/>
    <property type="match status" value="1"/>
</dbReference>
<dbReference type="InterPro" id="IPR051677">
    <property type="entry name" value="AfsR-DnrI-RedD_regulator"/>
</dbReference>
<dbReference type="InterPro" id="IPR005158">
    <property type="entry name" value="BTAD"/>
</dbReference>
<dbReference type="InterPro" id="IPR001867">
    <property type="entry name" value="OmpR/PhoB-type_DNA-bd"/>
</dbReference>
<dbReference type="InterPro" id="IPR016032">
    <property type="entry name" value="Sig_transdc_resp-reg_C-effctor"/>
</dbReference>
<dbReference type="InterPro" id="IPR011990">
    <property type="entry name" value="TPR-like_helical_dom_sf"/>
</dbReference>
<dbReference type="InterPro" id="IPR036388">
    <property type="entry name" value="WH-like_DNA-bd_sf"/>
</dbReference>
<dbReference type="PANTHER" id="PTHR35807:SF1">
    <property type="entry name" value="TRANSCRIPTIONAL REGULATOR REDD"/>
    <property type="match status" value="1"/>
</dbReference>
<dbReference type="PANTHER" id="PTHR35807">
    <property type="entry name" value="TRANSCRIPTIONAL REGULATOR REDD-RELATED"/>
    <property type="match status" value="1"/>
</dbReference>
<dbReference type="Pfam" id="PF03704">
    <property type="entry name" value="BTAD"/>
    <property type="match status" value="1"/>
</dbReference>
<dbReference type="SMART" id="SM01043">
    <property type="entry name" value="BTAD"/>
    <property type="match status" value="1"/>
</dbReference>
<dbReference type="SMART" id="SM00862">
    <property type="entry name" value="Trans_reg_C"/>
    <property type="match status" value="1"/>
</dbReference>
<dbReference type="SUPFAM" id="SSF46894">
    <property type="entry name" value="C-terminal effector domain of the bipartite response regulators"/>
    <property type="match status" value="1"/>
</dbReference>
<dbReference type="SUPFAM" id="SSF48452">
    <property type="entry name" value="TPR-like"/>
    <property type="match status" value="1"/>
</dbReference>
<dbReference type="PROSITE" id="PS51755">
    <property type="entry name" value="OMPR_PHOB"/>
    <property type="match status" value="1"/>
</dbReference>
<sequence>MQINMLGPLVAHHNGTSVTPIARKPRQVFSLLALQAGTVVPVPALMDELWGTQPPASALTTLQTYILQVRRGITVALGASHNGPAKDVLRTCYGGYLLDVDPTNTDVYAFERLAEEGKRACERGELDLASARFRQALDLWRGDALVDVHAGMRIGMEVARLEESRLGVLEARMETDLRLGRHAGLLPELSALTARHPMHENLWAQFMIALHRSGRTSQALEAFIKLRKTLVNELGVEPSARLQHLQHAILRADPGIDRNGPEVPAAASVALA</sequence>
<gene>
    <name type="primary">dnrI</name>
</gene>
<protein>
    <recommendedName>
        <fullName>Regulatory protein DnrI</fullName>
    </recommendedName>
</protein>
<name>DNRI_STRPE</name>
<evidence type="ECO:0000255" key="1">
    <source>
        <dbReference type="PROSITE-ProRule" id="PRU01091"/>
    </source>
</evidence>
<evidence type="ECO:0000305" key="2"/>
<keyword id="KW-0045">Antibiotic biosynthesis</keyword>
<keyword id="KW-0238">DNA-binding</keyword>
<keyword id="KW-0804">Transcription</keyword>
<keyword id="KW-0805">Transcription regulation</keyword>
<keyword id="KW-0902">Two-component regulatory system</keyword>